<proteinExistence type="inferred from homology"/>
<gene>
    <name evidence="1" type="primary">rplA</name>
    <name type="ordered locus">PA0668</name>
</gene>
<organism>
    <name type="scientific">Phytoplasma australiense</name>
    <dbReference type="NCBI Taxonomy" id="59748"/>
    <lineage>
        <taxon>Bacteria</taxon>
        <taxon>Bacillati</taxon>
        <taxon>Mycoplasmatota</taxon>
        <taxon>Mollicutes</taxon>
        <taxon>Acholeplasmatales</taxon>
        <taxon>Acholeplasmataceae</taxon>
        <taxon>Candidatus Phytoplasma</taxon>
        <taxon>16SrXII (Stolbur group)</taxon>
    </lineage>
</organism>
<sequence>MKRSKKYLAVSQMFDIKKRYPLQEAIKLTKQSQITKFDATVECAFHLNLDPKKADQNLRGALVLPHGTGKTLKLAVIAKGEQAKIAKEAQADYVGDEDLIEKISKNWFDFDVLVSTPEMMPQLSKLGRLLGPKGLMPNPKTGTVTDNVGQAVSEIKNGKIEYRLDKNGNIHAIIGKTSFEEHKLLENLKTLYLQLMRIKPRTAKGNYIKNVTISTTMSPGIKIDPITIA</sequence>
<keyword id="KW-1185">Reference proteome</keyword>
<keyword id="KW-0678">Repressor</keyword>
<keyword id="KW-0687">Ribonucleoprotein</keyword>
<keyword id="KW-0689">Ribosomal protein</keyword>
<keyword id="KW-0694">RNA-binding</keyword>
<keyword id="KW-0699">rRNA-binding</keyword>
<keyword id="KW-0810">Translation regulation</keyword>
<keyword id="KW-0820">tRNA-binding</keyword>
<comment type="function">
    <text evidence="1">Binds directly to 23S rRNA. The L1 stalk is quite mobile in the ribosome, and is involved in E site tRNA release.</text>
</comment>
<comment type="function">
    <text evidence="1">Protein L1 is also a translational repressor protein, it controls the translation of the L11 operon by binding to its mRNA.</text>
</comment>
<comment type="subunit">
    <text evidence="1">Part of the 50S ribosomal subunit.</text>
</comment>
<comment type="similarity">
    <text evidence="1">Belongs to the universal ribosomal protein uL1 family.</text>
</comment>
<protein>
    <recommendedName>
        <fullName evidence="1">Large ribosomal subunit protein uL1</fullName>
    </recommendedName>
    <alternativeName>
        <fullName evidence="2">50S ribosomal protein L1</fullName>
    </alternativeName>
</protein>
<reference key="1">
    <citation type="journal article" date="2008" name="J. Bacteriol.">
        <title>Comparative genome analysis of 'Candidatus Phytoplasma australiense' (subgroup tuf-Australia I; rp-A) and 'Ca. Phytoplasma asteris' strains OY-M and AY-WB.</title>
        <authorList>
            <person name="Tran-Nguyen L.T."/>
            <person name="Kube M."/>
            <person name="Schneider B."/>
            <person name="Reinhardt R."/>
            <person name="Gibb K.S."/>
        </authorList>
    </citation>
    <scope>NUCLEOTIDE SEQUENCE [LARGE SCALE GENOMIC DNA]</scope>
</reference>
<name>RL1_PHYAS</name>
<evidence type="ECO:0000255" key="1">
    <source>
        <dbReference type="HAMAP-Rule" id="MF_01318"/>
    </source>
</evidence>
<evidence type="ECO:0000305" key="2"/>
<feature type="chain" id="PRO_1000141440" description="Large ribosomal subunit protein uL1">
    <location>
        <begin position="1"/>
        <end position="229"/>
    </location>
</feature>
<accession>B1VAM9</accession>
<dbReference type="EMBL" id="AM422018">
    <property type="protein sequence ID" value="CAM12002.1"/>
    <property type="molecule type" value="Genomic_DNA"/>
</dbReference>
<dbReference type="SMR" id="B1VAM9"/>
<dbReference type="STRING" id="59748.PA0668"/>
<dbReference type="KEGG" id="pal:PA0668"/>
<dbReference type="eggNOG" id="COG0081">
    <property type="taxonomic scope" value="Bacteria"/>
</dbReference>
<dbReference type="Proteomes" id="UP000008323">
    <property type="component" value="Chromosome"/>
</dbReference>
<dbReference type="GO" id="GO:0015934">
    <property type="term" value="C:large ribosomal subunit"/>
    <property type="evidence" value="ECO:0007669"/>
    <property type="project" value="InterPro"/>
</dbReference>
<dbReference type="GO" id="GO:0019843">
    <property type="term" value="F:rRNA binding"/>
    <property type="evidence" value="ECO:0007669"/>
    <property type="project" value="UniProtKB-UniRule"/>
</dbReference>
<dbReference type="GO" id="GO:0003735">
    <property type="term" value="F:structural constituent of ribosome"/>
    <property type="evidence" value="ECO:0007669"/>
    <property type="project" value="InterPro"/>
</dbReference>
<dbReference type="GO" id="GO:0000049">
    <property type="term" value="F:tRNA binding"/>
    <property type="evidence" value="ECO:0007669"/>
    <property type="project" value="UniProtKB-KW"/>
</dbReference>
<dbReference type="GO" id="GO:0006417">
    <property type="term" value="P:regulation of translation"/>
    <property type="evidence" value="ECO:0007669"/>
    <property type="project" value="UniProtKB-KW"/>
</dbReference>
<dbReference type="GO" id="GO:0006412">
    <property type="term" value="P:translation"/>
    <property type="evidence" value="ECO:0007669"/>
    <property type="project" value="UniProtKB-UniRule"/>
</dbReference>
<dbReference type="CDD" id="cd00403">
    <property type="entry name" value="Ribosomal_L1"/>
    <property type="match status" value="1"/>
</dbReference>
<dbReference type="FunFam" id="3.40.50.790:FF:000001">
    <property type="entry name" value="50S ribosomal protein L1"/>
    <property type="match status" value="1"/>
</dbReference>
<dbReference type="Gene3D" id="3.30.190.20">
    <property type="match status" value="1"/>
</dbReference>
<dbReference type="Gene3D" id="3.40.50.790">
    <property type="match status" value="1"/>
</dbReference>
<dbReference type="HAMAP" id="MF_01318_B">
    <property type="entry name" value="Ribosomal_uL1_B"/>
    <property type="match status" value="1"/>
</dbReference>
<dbReference type="InterPro" id="IPR005878">
    <property type="entry name" value="Ribosom_uL1_bac-type"/>
</dbReference>
<dbReference type="InterPro" id="IPR002143">
    <property type="entry name" value="Ribosomal_uL1"/>
</dbReference>
<dbReference type="InterPro" id="IPR023674">
    <property type="entry name" value="Ribosomal_uL1-like"/>
</dbReference>
<dbReference type="InterPro" id="IPR028364">
    <property type="entry name" value="Ribosomal_uL1/biogenesis"/>
</dbReference>
<dbReference type="InterPro" id="IPR016095">
    <property type="entry name" value="Ribosomal_uL1_3-a/b-sand"/>
</dbReference>
<dbReference type="InterPro" id="IPR023673">
    <property type="entry name" value="Ribosomal_uL1_CS"/>
</dbReference>
<dbReference type="NCBIfam" id="TIGR01169">
    <property type="entry name" value="rplA_bact"/>
    <property type="match status" value="1"/>
</dbReference>
<dbReference type="PANTHER" id="PTHR36427">
    <property type="entry name" value="54S RIBOSOMAL PROTEIN L1, MITOCHONDRIAL"/>
    <property type="match status" value="1"/>
</dbReference>
<dbReference type="PANTHER" id="PTHR36427:SF3">
    <property type="entry name" value="LARGE RIBOSOMAL SUBUNIT PROTEIN UL1M"/>
    <property type="match status" value="1"/>
</dbReference>
<dbReference type="Pfam" id="PF00687">
    <property type="entry name" value="Ribosomal_L1"/>
    <property type="match status" value="1"/>
</dbReference>
<dbReference type="PIRSF" id="PIRSF002155">
    <property type="entry name" value="Ribosomal_L1"/>
    <property type="match status" value="1"/>
</dbReference>
<dbReference type="SUPFAM" id="SSF56808">
    <property type="entry name" value="Ribosomal protein L1"/>
    <property type="match status" value="1"/>
</dbReference>
<dbReference type="PROSITE" id="PS01199">
    <property type="entry name" value="RIBOSOMAL_L1"/>
    <property type="match status" value="1"/>
</dbReference>